<name>PRP31_XENTR</name>
<organism>
    <name type="scientific">Xenopus tropicalis</name>
    <name type="common">Western clawed frog</name>
    <name type="synonym">Silurana tropicalis</name>
    <dbReference type="NCBI Taxonomy" id="8364"/>
    <lineage>
        <taxon>Eukaryota</taxon>
        <taxon>Metazoa</taxon>
        <taxon>Chordata</taxon>
        <taxon>Craniata</taxon>
        <taxon>Vertebrata</taxon>
        <taxon>Euteleostomi</taxon>
        <taxon>Amphibia</taxon>
        <taxon>Batrachia</taxon>
        <taxon>Anura</taxon>
        <taxon>Pipoidea</taxon>
        <taxon>Pipidae</taxon>
        <taxon>Xenopodinae</taxon>
        <taxon>Xenopus</taxon>
        <taxon>Silurana</taxon>
    </lineage>
</organism>
<evidence type="ECO:0000250" key="1">
    <source>
        <dbReference type="UniProtKB" id="Q8WWY3"/>
    </source>
</evidence>
<evidence type="ECO:0000255" key="2">
    <source>
        <dbReference type="PROSITE-ProRule" id="PRU00690"/>
    </source>
</evidence>
<evidence type="ECO:0000256" key="3">
    <source>
        <dbReference type="SAM" id="MobiDB-lite"/>
    </source>
</evidence>
<evidence type="ECO:0000305" key="4"/>
<gene>
    <name type="primary">prpf31</name>
</gene>
<accession>Q6NVP6</accession>
<keyword id="KW-0175">Coiled coil</keyword>
<keyword id="KW-0507">mRNA processing</keyword>
<keyword id="KW-0508">mRNA splicing</keyword>
<keyword id="KW-0539">Nucleus</keyword>
<keyword id="KW-1185">Reference proteome</keyword>
<keyword id="KW-0687">Ribonucleoprotein</keyword>
<keyword id="KW-0694">RNA-binding</keyword>
<keyword id="KW-0747">Spliceosome</keyword>
<proteinExistence type="evidence at transcript level"/>
<feature type="chain" id="PRO_0000227803" description="U4/U6 small nuclear ribonucleoprotein Prp31">
    <location>
        <begin position="1"/>
        <end position="498"/>
    </location>
</feature>
<feature type="domain" description="Nop" evidence="2">
    <location>
        <begin position="214"/>
        <end position="332"/>
    </location>
</feature>
<feature type="region of interest" description="Disordered" evidence="3">
    <location>
        <begin position="333"/>
        <end position="356"/>
    </location>
</feature>
<feature type="coiled-coil region" evidence="1">
    <location>
        <begin position="84"/>
        <end position="119"/>
    </location>
</feature>
<feature type="coiled-coil region" evidence="1">
    <location>
        <begin position="180"/>
        <end position="214"/>
    </location>
</feature>
<feature type="short sequence motif" description="Nuclear localization signal (NLS)" evidence="1">
    <location>
        <begin position="350"/>
        <end position="363"/>
    </location>
</feature>
<feature type="site" description="Interaction with U4 snRNA" evidence="1">
    <location>
        <position position="246"/>
    </location>
</feature>
<feature type="site" description="Interaction with U4 snRNA and U4atac snRNA" evidence="1">
    <location>
        <position position="269"/>
    </location>
</feature>
<feature type="site" description="Interaction with U4atac snRNA" evidence="1">
    <location>
        <position position="288"/>
    </location>
</feature>
<feature type="site" description="Interaction with U4 snRNA and U4atac snRNA" evidence="1">
    <location>
        <position position="292"/>
    </location>
</feature>
<feature type="site" description="Interaction with U4 snRNA and U4atac snRNA" evidence="1">
    <location>
        <position position="297"/>
    </location>
</feature>
<reference key="1">
    <citation type="submission" date="2004-03" db="EMBL/GenBank/DDBJ databases">
        <authorList>
            <consortium name="NIH - Xenopus Gene Collection (XGC) project"/>
        </authorList>
    </citation>
    <scope>NUCLEOTIDE SEQUENCE [LARGE SCALE MRNA]</scope>
    <source>
        <tissue>Embryo</tissue>
    </source>
</reference>
<comment type="function">
    <text evidence="1">Involved in pre-mRNA splicing as component of the spliceosome. Required for the assembly of the U4/U5/U6 tri-snRNP complex, one of the building blocks of the spliceosome.</text>
</comment>
<comment type="subunit">
    <text evidence="1">Identified in the spliceosome B complex. Component of the U4/U6-U5 tri-snRNP complex. Component of some MLL1/MLL complex.</text>
</comment>
<comment type="subcellular location">
    <subcellularLocation>
        <location evidence="1">Nucleus</location>
    </subcellularLocation>
    <subcellularLocation>
        <location evidence="1">Nucleus speckle</location>
    </subcellularLocation>
    <subcellularLocation>
        <location evidence="1">Nucleus</location>
        <location evidence="1">Cajal body</location>
    </subcellularLocation>
    <text evidence="1">Predominantly found in speckles and in Cajal bodies.</text>
</comment>
<comment type="domain">
    <text evidence="1">Interacts with the snRNP via the Nop domain.</text>
</comment>
<comment type="domain">
    <text evidence="1">The coiled coil domain is formed by two non-contiguous helices.</text>
</comment>
<comment type="similarity">
    <text evidence="4">Belongs to the PRP31 family.</text>
</comment>
<sequence>MSLADELLADLEEAAEEEEENLIDEDDLETIEEVQEEMQVDLNAESVKSIAKLSDSKLFSEILLKIDGYIKKQPKASEVMGPVEAAPEYKVIVDANNLTVEIENELNIIHKFIRDKYSKRFPELESLVPNALDYIRTVKELGNNLDKCKNNENLQQILTNATIMVVSVTASTTQGQQLTDEELERIEEACDMALELNQSKHRIYEYVESRMSFIAPNLSIIVGASTAAKIMGIAGGLTNLSKMPACNVMLLGAQRKTLSGFSSTSVLPHTGYIYHSDIVQSLPPDLHRKAARLVSAKCTLAARVDSFHESSEGKVGYDLKEEIERKFDKWQEPPPVKQVKPLPAPLDGQRKKRGGRRYRKMKERLGLTEIRKQANRMSFAEIEEDAYQEDLGFSLGHLGKSGSGRIRQAQVNEATKARISKTLQRTLQKQSVVYGGKSTIRDRSSGTASSVAFTPLQGLEIVNPQAAEKKVAEANQKYFSSMAEFLKVKSEKSGTMTQ</sequence>
<dbReference type="EMBL" id="BC067959">
    <property type="protein sequence ID" value="AAH67959.1"/>
    <property type="molecule type" value="mRNA"/>
</dbReference>
<dbReference type="RefSeq" id="NP_998859.1">
    <property type="nucleotide sequence ID" value="NM_213694.1"/>
</dbReference>
<dbReference type="RefSeq" id="XP_012821785.1">
    <property type="nucleotide sequence ID" value="XM_012966331.3"/>
</dbReference>
<dbReference type="SMR" id="Q6NVP6"/>
<dbReference type="FunCoup" id="Q6NVP6">
    <property type="interactions" value="3434"/>
</dbReference>
<dbReference type="STRING" id="8364.ENSXETP00000012934"/>
<dbReference type="PaxDb" id="8364-ENSXETP00000023852"/>
<dbReference type="DNASU" id="407890"/>
<dbReference type="GeneID" id="407890"/>
<dbReference type="KEGG" id="xtr:407890"/>
<dbReference type="AGR" id="Xenbase:XB-GENE-489336"/>
<dbReference type="CTD" id="26121"/>
<dbReference type="Xenbase" id="XB-GENE-489336">
    <property type="gene designation" value="prpf31"/>
</dbReference>
<dbReference type="eggNOG" id="KOG2574">
    <property type="taxonomic scope" value="Eukaryota"/>
</dbReference>
<dbReference type="HOGENOM" id="CLU_026337_2_0_1"/>
<dbReference type="InParanoid" id="Q6NVP6"/>
<dbReference type="OMA" id="IGNGPMD"/>
<dbReference type="OrthoDB" id="4771285at2759"/>
<dbReference type="PhylomeDB" id="Q6NVP6"/>
<dbReference type="TreeFam" id="TF300677"/>
<dbReference type="Proteomes" id="UP000008143">
    <property type="component" value="Chromosome 7"/>
</dbReference>
<dbReference type="Bgee" id="ENSXETG00000010916">
    <property type="expression patterns" value="Expressed in blastula and 12 other cell types or tissues"/>
</dbReference>
<dbReference type="ExpressionAtlas" id="Q6NVP6">
    <property type="expression patterns" value="baseline"/>
</dbReference>
<dbReference type="GO" id="GO:0015030">
    <property type="term" value="C:Cajal body"/>
    <property type="evidence" value="ECO:0007669"/>
    <property type="project" value="UniProtKB-SubCell"/>
</dbReference>
<dbReference type="GO" id="GO:0071339">
    <property type="term" value="C:MLL1 complex"/>
    <property type="evidence" value="ECO:0000250"/>
    <property type="project" value="UniProtKB"/>
</dbReference>
<dbReference type="GO" id="GO:0016607">
    <property type="term" value="C:nuclear speck"/>
    <property type="evidence" value="ECO:0007669"/>
    <property type="project" value="UniProtKB-SubCell"/>
</dbReference>
<dbReference type="GO" id="GO:0005634">
    <property type="term" value="C:nucleus"/>
    <property type="evidence" value="ECO:0000250"/>
    <property type="project" value="UniProtKB"/>
</dbReference>
<dbReference type="GO" id="GO:0071005">
    <property type="term" value="C:U2-type precatalytic spliceosome"/>
    <property type="evidence" value="ECO:0000250"/>
    <property type="project" value="UniProtKB"/>
</dbReference>
<dbReference type="GO" id="GO:0046540">
    <property type="term" value="C:U4/U6 x U5 tri-snRNP complex"/>
    <property type="evidence" value="ECO:0000250"/>
    <property type="project" value="UniProtKB"/>
</dbReference>
<dbReference type="GO" id="GO:0005690">
    <property type="term" value="C:U4atac snRNP"/>
    <property type="evidence" value="ECO:0000250"/>
    <property type="project" value="UniProtKB"/>
</dbReference>
<dbReference type="GO" id="GO:0030622">
    <property type="term" value="F:U4atac snRNA binding"/>
    <property type="evidence" value="ECO:0000250"/>
    <property type="project" value="UniProtKB"/>
</dbReference>
<dbReference type="GO" id="GO:0000398">
    <property type="term" value="P:mRNA splicing, via spliceosome"/>
    <property type="evidence" value="ECO:0000250"/>
    <property type="project" value="UniProtKB"/>
</dbReference>
<dbReference type="GO" id="GO:0000244">
    <property type="term" value="P:spliceosomal tri-snRNP complex assembly"/>
    <property type="evidence" value="ECO:0007669"/>
    <property type="project" value="InterPro"/>
</dbReference>
<dbReference type="FunFam" id="1.10.287.4070:FF:000003">
    <property type="entry name" value="U4/U6 small nuclear ribonucleoprotein PRP31"/>
    <property type="match status" value="1"/>
</dbReference>
<dbReference type="FunFam" id="1.10.246.90:FF:000002">
    <property type="entry name" value="U4/U6 small nuclear ribonucleoprotein Prp31"/>
    <property type="match status" value="1"/>
</dbReference>
<dbReference type="Gene3D" id="1.10.287.4070">
    <property type="match status" value="1"/>
</dbReference>
<dbReference type="Gene3D" id="1.10.246.90">
    <property type="entry name" value="Nop domain"/>
    <property type="match status" value="1"/>
</dbReference>
<dbReference type="InterPro" id="IPR042239">
    <property type="entry name" value="Nop_C"/>
</dbReference>
<dbReference type="InterPro" id="IPR002687">
    <property type="entry name" value="Nop_dom"/>
</dbReference>
<dbReference type="InterPro" id="IPR036070">
    <property type="entry name" value="Nop_dom_sf"/>
</dbReference>
<dbReference type="InterPro" id="IPR012976">
    <property type="entry name" value="NOSIC"/>
</dbReference>
<dbReference type="InterPro" id="IPR027105">
    <property type="entry name" value="Prp31"/>
</dbReference>
<dbReference type="InterPro" id="IPR019175">
    <property type="entry name" value="Prp31_C"/>
</dbReference>
<dbReference type="PANTHER" id="PTHR13904">
    <property type="entry name" value="PRE-MRNA SPLICING FACTOR PRP31"/>
    <property type="match status" value="1"/>
</dbReference>
<dbReference type="PANTHER" id="PTHR13904:SF0">
    <property type="entry name" value="U4_U6 SMALL NUCLEAR RIBONUCLEOPROTEIN PRP31"/>
    <property type="match status" value="1"/>
</dbReference>
<dbReference type="Pfam" id="PF01798">
    <property type="entry name" value="Nop"/>
    <property type="match status" value="1"/>
</dbReference>
<dbReference type="Pfam" id="PF09785">
    <property type="entry name" value="Prp31_C"/>
    <property type="match status" value="1"/>
</dbReference>
<dbReference type="SMART" id="SM00931">
    <property type="entry name" value="NOSIC"/>
    <property type="match status" value="1"/>
</dbReference>
<dbReference type="SUPFAM" id="SSF89124">
    <property type="entry name" value="Nop domain"/>
    <property type="match status" value="1"/>
</dbReference>
<dbReference type="PROSITE" id="PS51358">
    <property type="entry name" value="NOP"/>
    <property type="match status" value="1"/>
</dbReference>
<protein>
    <recommendedName>
        <fullName>U4/U6 small nuclear ribonucleoprotein Prp31</fullName>
    </recommendedName>
    <alternativeName>
        <fullName>Pre-mRNA-processing factor 31</fullName>
    </alternativeName>
</protein>